<gene>
    <name evidence="1" type="primary">psbK</name>
</gene>
<sequence length="54" mass="6314">MSFITLNNFFNTNTFFGLLPEQYAPFDPLIDVLPIIPVLFFLLAFVWQASVKFR</sequence>
<dbReference type="EMBL" id="Z11874">
    <property type="status" value="NOT_ANNOTATED_CDS"/>
    <property type="molecule type" value="Genomic_DNA"/>
</dbReference>
<dbReference type="EMBL" id="X70810">
    <property type="protein sequence ID" value="CAA50085.1"/>
    <property type="molecule type" value="Genomic_DNA"/>
</dbReference>
<dbReference type="PIR" id="S34506">
    <property type="entry name" value="S34506"/>
</dbReference>
<dbReference type="RefSeq" id="NP_041898.1">
    <property type="nucleotide sequence ID" value="NC_001603.2"/>
</dbReference>
<dbReference type="SMR" id="P31481"/>
<dbReference type="GeneID" id="807484"/>
<dbReference type="GO" id="GO:0009535">
    <property type="term" value="C:chloroplast thylakoid membrane"/>
    <property type="evidence" value="ECO:0007669"/>
    <property type="project" value="UniProtKB-SubCell"/>
</dbReference>
<dbReference type="GO" id="GO:0009539">
    <property type="term" value="C:photosystem II reaction center"/>
    <property type="evidence" value="ECO:0007669"/>
    <property type="project" value="InterPro"/>
</dbReference>
<dbReference type="GO" id="GO:0015979">
    <property type="term" value="P:photosynthesis"/>
    <property type="evidence" value="ECO:0007669"/>
    <property type="project" value="UniProtKB-UniRule"/>
</dbReference>
<dbReference type="HAMAP" id="MF_00441">
    <property type="entry name" value="PSII_PsbK"/>
    <property type="match status" value="1"/>
</dbReference>
<dbReference type="InterPro" id="IPR003687">
    <property type="entry name" value="PSII_PsbK"/>
</dbReference>
<dbReference type="InterPro" id="IPR037270">
    <property type="entry name" value="PSII_PsbK_sf"/>
</dbReference>
<dbReference type="NCBIfam" id="NF002715">
    <property type="entry name" value="PRK02553.1"/>
    <property type="match status" value="1"/>
</dbReference>
<dbReference type="PANTHER" id="PTHR35325">
    <property type="match status" value="1"/>
</dbReference>
<dbReference type="PANTHER" id="PTHR35325:SF1">
    <property type="entry name" value="PHOTOSYSTEM II REACTION CENTER PROTEIN K"/>
    <property type="match status" value="1"/>
</dbReference>
<dbReference type="Pfam" id="PF02533">
    <property type="entry name" value="PsbK"/>
    <property type="match status" value="1"/>
</dbReference>
<dbReference type="SUPFAM" id="SSF161037">
    <property type="entry name" value="Photosystem II reaction center protein K, PsbK"/>
    <property type="match status" value="1"/>
</dbReference>
<protein>
    <recommendedName>
        <fullName evidence="1">Photosystem II reaction center protein K</fullName>
        <shortName evidence="1">PSII-K</shortName>
    </recommendedName>
</protein>
<evidence type="ECO:0000255" key="1">
    <source>
        <dbReference type="HAMAP-Rule" id="MF_00441"/>
    </source>
</evidence>
<evidence type="ECO:0000305" key="2"/>
<comment type="function">
    <text evidence="1">One of the components of the core complex of photosystem II (PSII). PSII is a light-driven water:plastoquinone oxidoreductase that uses light energy to abstract electrons from H(2)O, generating O(2) and a proton gradient subsequently used for ATP formation. It consists of a core antenna complex that captures photons, and an electron transfer chain that converts photonic excitation into a charge separation.</text>
</comment>
<comment type="subunit">
    <text evidence="2">PSII is composed of 1 copy each of membrane proteins PsbA, PsbB, PsbC, PsbD, PsbE, PsbF, PsbH, PsbI, PsbJ, PsbK, PsbL, PsbM, PsbT, PsbY, PsbZ, Psb30/Ycf12, at least 3 peripheral proteins of the oxygen-evolving complex and a large number of cofactors. It forms dimeric complexes.</text>
</comment>
<comment type="subcellular location">
    <subcellularLocation>
        <location evidence="1">Plastid</location>
        <location evidence="1">Chloroplast thylakoid membrane</location>
        <topology evidence="1">Single-pass membrane protein</topology>
    </subcellularLocation>
</comment>
<comment type="similarity">
    <text evidence="1">Belongs to the PsbK family.</text>
</comment>
<accession>P31481</accession>
<keyword id="KW-0150">Chloroplast</keyword>
<keyword id="KW-0472">Membrane</keyword>
<keyword id="KW-0602">Photosynthesis</keyword>
<keyword id="KW-0604">Photosystem II</keyword>
<keyword id="KW-0934">Plastid</keyword>
<keyword id="KW-0674">Reaction center</keyword>
<keyword id="KW-0793">Thylakoid</keyword>
<keyword id="KW-0812">Transmembrane</keyword>
<keyword id="KW-1133">Transmembrane helix</keyword>
<name>PSBK_EUGGR</name>
<organism>
    <name type="scientific">Euglena gracilis</name>
    <dbReference type="NCBI Taxonomy" id="3039"/>
    <lineage>
        <taxon>Eukaryota</taxon>
        <taxon>Discoba</taxon>
        <taxon>Euglenozoa</taxon>
        <taxon>Euglenida</taxon>
        <taxon>Spirocuta</taxon>
        <taxon>Euglenophyceae</taxon>
        <taxon>Euglenales</taxon>
        <taxon>Euglenaceae</taxon>
        <taxon>Euglena</taxon>
    </lineage>
</organism>
<reference key="1">
    <citation type="journal article" date="1993" name="Nucleic Acids Res.">
        <title>Complete sequence of Euglena gracilis chloroplast DNA.</title>
        <authorList>
            <person name="Hallick R.B."/>
            <person name="Hong L."/>
            <person name="Drager R.G."/>
            <person name="Favreau M.R."/>
            <person name="Monfort A."/>
            <person name="Orsat B."/>
            <person name="Spielmann A."/>
            <person name="Stutz E."/>
        </authorList>
    </citation>
    <scope>NUCLEOTIDE SEQUENCE [LARGE SCALE GENOMIC DNA]</scope>
    <source>
        <strain>Z / UTEX 753</strain>
    </source>
</reference>
<feature type="propeptide" id="PRO_0000029459" evidence="1">
    <location>
        <begin position="1"/>
        <end position="17"/>
    </location>
</feature>
<feature type="chain" id="PRO_0000029460" description="Photosystem II reaction center protein K" evidence="1">
    <location>
        <begin position="18"/>
        <end position="54"/>
    </location>
</feature>
<feature type="transmembrane region" description="Helical" evidence="1">
    <location>
        <begin position="29"/>
        <end position="49"/>
    </location>
</feature>
<proteinExistence type="inferred from homology"/>
<geneLocation type="chloroplast"/>